<sequence length="562" mass="62513">MKPHSVFADSLWPSIDLLYDYAPFLQQSMVDGHIGFFPTGITPPRVAIIGAGISGLIAATELLRAGVRDITLFEARDRLGGRAWSQLFDPHYYPRLIAEMGAMRFPPSATGLFHYLNRFSIQTSASFPDPGIVDTELHYRGVRHLWPAGEQPPALFTRVHNGWRALLYEGCLLDGVSLVGPLQITAMLKSERFDEAAEAWQIWLNVFRDCSFYSAMVTIFTGTNPPGGIAWERRDDFELFGALGIGSGGFLPVYQAGFTEILRMVINGYEDDQRLIIGGISTLAEQLARQEIRGTTPGRHVRFSKVNRISKDNGKISLATDVKPVDAFDRVIVTSNNRAMQMVHGLSADETFLNQDVCRAVRETHLTGSSKLFMLTRDKFWLKNKLPLTIQSDGLVRGVYVLDYESDNPEGRGVVLLSYTWEDDAHKLLAITDKKQRGQHLVDELSAIHPEFARYLVPAGADYERYVLHHDWLTDPCSAGAFKLNYPGEDVYSQRLFFQFKTANHPEQDSGLLLAGCGCSFTGGWVEGAVQTAVNSACAVIRSTGGTLYGNPLDSVHSIYDY</sequence>
<name>TR2M_PANAY</name>
<accession>Q47861</accession>
<protein>
    <recommendedName>
        <fullName>Tryptophan 2-monooxygenase</fullName>
        <ecNumber>1.13.12.3</ecNumber>
    </recommendedName>
</protein>
<reference key="1">
    <citation type="journal article" date="1997" name="Isr. J. Plant Sci.">
        <title>Characterization of the auxin synthesis genes of Erwinia herbicola pv. gypsophilae.</title>
        <authorList>
            <person name="Gafni Y."/>
            <person name="Manulis S."/>
            <person name="Kunik T."/>
            <person name="Lichter A.L."/>
            <person name="Barash I.B."/>
            <person name="Ophir Y."/>
        </authorList>
    </citation>
    <scope>NUCLEOTIDE SEQUENCE [GENOMIC DNA]</scope>
    <source>
        <strain>PD713</strain>
    </source>
</reference>
<evidence type="ECO:0000250" key="1"/>
<evidence type="ECO:0000305" key="2"/>
<proteinExistence type="inferred from homology"/>
<organism>
    <name type="scientific">Pantoea agglomerans pv. gypsophilae</name>
    <name type="common">Erwinia herbicola</name>
    <dbReference type="NCBI Taxonomy" id="48984"/>
    <lineage>
        <taxon>Bacteria</taxon>
        <taxon>Pseudomonadati</taxon>
        <taxon>Pseudomonadota</taxon>
        <taxon>Gammaproteobacteria</taxon>
        <taxon>Enterobacterales</taxon>
        <taxon>Erwiniaceae</taxon>
        <taxon>Pantoea</taxon>
        <taxon>Pantoea agglomerans group</taxon>
    </lineage>
</organism>
<dbReference type="EC" id="1.13.12.3"/>
<dbReference type="EMBL" id="L33867">
    <property type="protein sequence ID" value="AAC17187.1"/>
    <property type="molecule type" value="Genomic_DNA"/>
</dbReference>
<dbReference type="SMR" id="Q47861"/>
<dbReference type="UniPathway" id="UPA00151"/>
<dbReference type="GO" id="GO:0001716">
    <property type="term" value="F:L-amino-acid oxidase activity"/>
    <property type="evidence" value="ECO:0007669"/>
    <property type="project" value="TreeGrafter"/>
</dbReference>
<dbReference type="GO" id="GO:0050361">
    <property type="term" value="F:tryptophan 2-monooxygenase activity"/>
    <property type="evidence" value="ECO:0007669"/>
    <property type="project" value="UniProtKB-EC"/>
</dbReference>
<dbReference type="GO" id="GO:0009063">
    <property type="term" value="P:amino acid catabolic process"/>
    <property type="evidence" value="ECO:0007669"/>
    <property type="project" value="TreeGrafter"/>
</dbReference>
<dbReference type="GO" id="GO:0009851">
    <property type="term" value="P:auxin biosynthetic process"/>
    <property type="evidence" value="ECO:0007669"/>
    <property type="project" value="UniProtKB-UniPathway"/>
</dbReference>
<dbReference type="Gene3D" id="1.10.405.40">
    <property type="match status" value="1"/>
</dbReference>
<dbReference type="Gene3D" id="3.90.660.10">
    <property type="match status" value="1"/>
</dbReference>
<dbReference type="Gene3D" id="3.50.50.60">
    <property type="entry name" value="FAD/NAD(P)-binding domain"/>
    <property type="match status" value="1"/>
</dbReference>
<dbReference type="InterPro" id="IPR002937">
    <property type="entry name" value="Amino_oxidase"/>
</dbReference>
<dbReference type="InterPro" id="IPR036188">
    <property type="entry name" value="FAD/NAD-bd_sf"/>
</dbReference>
<dbReference type="InterPro" id="IPR050281">
    <property type="entry name" value="Flavin_monoamine_oxidase"/>
</dbReference>
<dbReference type="PANTHER" id="PTHR10742:SF342">
    <property type="entry name" value="AMINE OXIDASE"/>
    <property type="match status" value="1"/>
</dbReference>
<dbReference type="PANTHER" id="PTHR10742">
    <property type="entry name" value="FLAVIN MONOAMINE OXIDASE"/>
    <property type="match status" value="1"/>
</dbReference>
<dbReference type="Pfam" id="PF01593">
    <property type="entry name" value="Amino_oxidase"/>
    <property type="match status" value="1"/>
</dbReference>
<dbReference type="PRINTS" id="PR00419">
    <property type="entry name" value="ADXRDTASE"/>
</dbReference>
<dbReference type="SUPFAM" id="SSF54373">
    <property type="entry name" value="FAD-linked reductases, C-terminal domain"/>
    <property type="match status" value="1"/>
</dbReference>
<dbReference type="SUPFAM" id="SSF51905">
    <property type="entry name" value="FAD/NAD(P)-binding domain"/>
    <property type="match status" value="1"/>
</dbReference>
<gene>
    <name type="primary">iaaM</name>
</gene>
<comment type="catalytic activity">
    <reaction>
        <text>L-tryptophan + O2 = indole-3-acetamide + CO2 + H2O</text>
        <dbReference type="Rhea" id="RHEA:16165"/>
        <dbReference type="ChEBI" id="CHEBI:15377"/>
        <dbReference type="ChEBI" id="CHEBI:15379"/>
        <dbReference type="ChEBI" id="CHEBI:16031"/>
        <dbReference type="ChEBI" id="CHEBI:16526"/>
        <dbReference type="ChEBI" id="CHEBI:57912"/>
        <dbReference type="EC" id="1.13.12.3"/>
    </reaction>
</comment>
<comment type="cofactor">
    <cofactor evidence="1">
        <name>FMN</name>
        <dbReference type="ChEBI" id="CHEBI:58210"/>
    </cofactor>
    <text evidence="1">Binds 1 FMN per subunit.</text>
</comment>
<comment type="pathway">
    <text>Plant hormone metabolism; auxin biosynthesis.</text>
</comment>
<comment type="similarity">
    <text evidence="2">Belongs to the tryptophan 2-monooxygenase family.</text>
</comment>
<feature type="chain" id="PRO_0000065589" description="Tryptophan 2-monooxygenase">
    <location>
        <begin position="1"/>
        <end position="562"/>
    </location>
</feature>
<feature type="binding site" evidence="1">
    <location>
        <position position="54"/>
    </location>
    <ligand>
        <name>FMN</name>
        <dbReference type="ChEBI" id="CHEBI:58210"/>
    </ligand>
</feature>
<feature type="binding site" evidence="1">
    <location>
        <position position="74"/>
    </location>
    <ligand>
        <name>FMN</name>
        <dbReference type="ChEBI" id="CHEBI:58210"/>
    </ligand>
</feature>
<feature type="binding site" evidence="1">
    <location>
        <position position="76"/>
    </location>
    <ligand>
        <name>FMN</name>
        <dbReference type="ChEBI" id="CHEBI:58210"/>
    </ligand>
</feature>
<feature type="binding site" evidence="1">
    <location>
        <position position="82"/>
    </location>
    <ligand>
        <name>FMN</name>
        <dbReference type="ChEBI" id="CHEBI:58210"/>
    </ligand>
</feature>
<feature type="binding site" evidence="1">
    <location>
        <position position="104"/>
    </location>
    <ligand>
        <name>FMN</name>
        <dbReference type="ChEBI" id="CHEBI:58210"/>
    </ligand>
</feature>
<feature type="binding site" evidence="1">
    <location>
        <position position="104"/>
    </location>
    <ligand>
        <name>substrate</name>
    </ligand>
</feature>
<keyword id="KW-0073">Auxin biosynthesis</keyword>
<keyword id="KW-0285">Flavoprotein</keyword>
<keyword id="KW-0288">FMN</keyword>
<keyword id="KW-0503">Monooxygenase</keyword>
<keyword id="KW-0560">Oxidoreductase</keyword>